<organism>
    <name type="scientific">Aliivibrio salmonicida (strain LFI1238)</name>
    <name type="common">Vibrio salmonicida (strain LFI1238)</name>
    <dbReference type="NCBI Taxonomy" id="316275"/>
    <lineage>
        <taxon>Bacteria</taxon>
        <taxon>Pseudomonadati</taxon>
        <taxon>Pseudomonadota</taxon>
        <taxon>Gammaproteobacteria</taxon>
        <taxon>Vibrionales</taxon>
        <taxon>Vibrionaceae</taxon>
        <taxon>Aliivibrio</taxon>
    </lineage>
</organism>
<feature type="chain" id="PRO_1000091921" description="DNA-directed RNA polymerase subunit alpha">
    <location>
        <begin position="1"/>
        <end position="329"/>
    </location>
</feature>
<feature type="region of interest" description="Alpha N-terminal domain (alpha-NTD)" evidence="1">
    <location>
        <begin position="1"/>
        <end position="235"/>
    </location>
</feature>
<feature type="region of interest" description="Alpha C-terminal domain (alpha-CTD)" evidence="1">
    <location>
        <begin position="249"/>
        <end position="329"/>
    </location>
</feature>
<comment type="function">
    <text evidence="1">DNA-dependent RNA polymerase catalyzes the transcription of DNA into RNA using the four ribonucleoside triphosphates as substrates.</text>
</comment>
<comment type="catalytic activity">
    <reaction evidence="1">
        <text>RNA(n) + a ribonucleoside 5'-triphosphate = RNA(n+1) + diphosphate</text>
        <dbReference type="Rhea" id="RHEA:21248"/>
        <dbReference type="Rhea" id="RHEA-COMP:14527"/>
        <dbReference type="Rhea" id="RHEA-COMP:17342"/>
        <dbReference type="ChEBI" id="CHEBI:33019"/>
        <dbReference type="ChEBI" id="CHEBI:61557"/>
        <dbReference type="ChEBI" id="CHEBI:140395"/>
        <dbReference type="EC" id="2.7.7.6"/>
    </reaction>
</comment>
<comment type="subunit">
    <text evidence="1">Homodimer. The RNAP catalytic core consists of 2 alpha, 1 beta, 1 beta' and 1 omega subunit. When a sigma factor is associated with the core the holoenzyme is formed, which can initiate transcription.</text>
</comment>
<comment type="domain">
    <text evidence="1">The N-terminal domain is essential for RNAP assembly and basal transcription, whereas the C-terminal domain is involved in interaction with transcriptional regulators and with upstream promoter elements.</text>
</comment>
<comment type="similarity">
    <text evidence="1">Belongs to the RNA polymerase alpha chain family.</text>
</comment>
<name>RPOA_ALISL</name>
<reference key="1">
    <citation type="journal article" date="2008" name="BMC Genomics">
        <title>The genome sequence of the fish pathogen Aliivibrio salmonicida strain LFI1238 shows extensive evidence of gene decay.</title>
        <authorList>
            <person name="Hjerde E."/>
            <person name="Lorentzen M.S."/>
            <person name="Holden M.T."/>
            <person name="Seeger K."/>
            <person name="Paulsen S."/>
            <person name="Bason N."/>
            <person name="Churcher C."/>
            <person name="Harris D."/>
            <person name="Norbertczak H."/>
            <person name="Quail M.A."/>
            <person name="Sanders S."/>
            <person name="Thurston S."/>
            <person name="Parkhill J."/>
            <person name="Willassen N.P."/>
            <person name="Thomson N.R."/>
        </authorList>
    </citation>
    <scope>NUCLEOTIDE SEQUENCE [LARGE SCALE GENOMIC DNA]</scope>
    <source>
        <strain>LFI1238</strain>
    </source>
</reference>
<evidence type="ECO:0000255" key="1">
    <source>
        <dbReference type="HAMAP-Rule" id="MF_00059"/>
    </source>
</evidence>
<proteinExistence type="inferred from homology"/>
<keyword id="KW-0240">DNA-directed RNA polymerase</keyword>
<keyword id="KW-0548">Nucleotidyltransferase</keyword>
<keyword id="KW-0804">Transcription</keyword>
<keyword id="KW-0808">Transferase</keyword>
<accession>B6EPU9</accession>
<sequence>MQGSVTEFLKPRLVDIEQVSLTHAKVTLEPLERGFGHTLGNALRRILLSSMPGCAVTEVEIEGVLHEYSTKEGVQEDILEILLNLKGLAVKVEGKDEVIITLNKSGAGPVVAGDITHDGDVEIANPEHVICHLTDDNAEISMRIKVERGRGYVPSTARIHTEEDERPIGRLLVDATYSPVDKISYAVEAARVEQRTDLDKLVIDMETNGTLDPEEAIRRAATILAEQLDAFVDLRDVRVPEEKEEKPEFDPILLRPVDDLELTVRSANCLKAEAIHYIGDLVQRTEVELLKTPNLGKKSLTEIKDVLASRGLSLGMRLENWPPASIAED</sequence>
<protein>
    <recommendedName>
        <fullName evidence="1">DNA-directed RNA polymerase subunit alpha</fullName>
        <shortName evidence="1">RNAP subunit alpha</shortName>
        <ecNumber evidence="1">2.7.7.6</ecNumber>
    </recommendedName>
    <alternativeName>
        <fullName evidence="1">RNA polymerase subunit alpha</fullName>
    </alternativeName>
    <alternativeName>
        <fullName evidence="1">Transcriptase subunit alpha</fullName>
    </alternativeName>
</protein>
<gene>
    <name evidence="1" type="primary">rpoA</name>
    <name type="ordered locus">VSAL_I0344</name>
</gene>
<dbReference type="EC" id="2.7.7.6" evidence="1"/>
<dbReference type="EMBL" id="FM178379">
    <property type="protein sequence ID" value="CAQ78029.1"/>
    <property type="molecule type" value="Genomic_DNA"/>
</dbReference>
<dbReference type="RefSeq" id="WP_012549172.1">
    <property type="nucleotide sequence ID" value="NC_011312.1"/>
</dbReference>
<dbReference type="SMR" id="B6EPU9"/>
<dbReference type="KEGG" id="vsa:VSAL_I0344"/>
<dbReference type="eggNOG" id="COG0202">
    <property type="taxonomic scope" value="Bacteria"/>
</dbReference>
<dbReference type="HOGENOM" id="CLU_053084_0_0_6"/>
<dbReference type="Proteomes" id="UP000001730">
    <property type="component" value="Chromosome 1"/>
</dbReference>
<dbReference type="GO" id="GO:0005737">
    <property type="term" value="C:cytoplasm"/>
    <property type="evidence" value="ECO:0007669"/>
    <property type="project" value="UniProtKB-ARBA"/>
</dbReference>
<dbReference type="GO" id="GO:0000428">
    <property type="term" value="C:DNA-directed RNA polymerase complex"/>
    <property type="evidence" value="ECO:0007669"/>
    <property type="project" value="UniProtKB-KW"/>
</dbReference>
<dbReference type="GO" id="GO:0003677">
    <property type="term" value="F:DNA binding"/>
    <property type="evidence" value="ECO:0007669"/>
    <property type="project" value="UniProtKB-UniRule"/>
</dbReference>
<dbReference type="GO" id="GO:0003899">
    <property type="term" value="F:DNA-directed RNA polymerase activity"/>
    <property type="evidence" value="ECO:0007669"/>
    <property type="project" value="UniProtKB-UniRule"/>
</dbReference>
<dbReference type="GO" id="GO:0046983">
    <property type="term" value="F:protein dimerization activity"/>
    <property type="evidence" value="ECO:0007669"/>
    <property type="project" value="InterPro"/>
</dbReference>
<dbReference type="GO" id="GO:0006351">
    <property type="term" value="P:DNA-templated transcription"/>
    <property type="evidence" value="ECO:0007669"/>
    <property type="project" value="UniProtKB-UniRule"/>
</dbReference>
<dbReference type="CDD" id="cd06928">
    <property type="entry name" value="RNAP_alpha_NTD"/>
    <property type="match status" value="1"/>
</dbReference>
<dbReference type="FunFam" id="1.10.150.20:FF:000001">
    <property type="entry name" value="DNA-directed RNA polymerase subunit alpha"/>
    <property type="match status" value="1"/>
</dbReference>
<dbReference type="FunFam" id="2.170.120.12:FF:000001">
    <property type="entry name" value="DNA-directed RNA polymerase subunit alpha"/>
    <property type="match status" value="1"/>
</dbReference>
<dbReference type="Gene3D" id="1.10.150.20">
    <property type="entry name" value="5' to 3' exonuclease, C-terminal subdomain"/>
    <property type="match status" value="1"/>
</dbReference>
<dbReference type="Gene3D" id="2.170.120.12">
    <property type="entry name" value="DNA-directed RNA polymerase, insert domain"/>
    <property type="match status" value="1"/>
</dbReference>
<dbReference type="Gene3D" id="3.30.1360.10">
    <property type="entry name" value="RNA polymerase, RBP11-like subunit"/>
    <property type="match status" value="1"/>
</dbReference>
<dbReference type="HAMAP" id="MF_00059">
    <property type="entry name" value="RNApol_bact_RpoA"/>
    <property type="match status" value="1"/>
</dbReference>
<dbReference type="InterPro" id="IPR011262">
    <property type="entry name" value="DNA-dir_RNA_pol_insert"/>
</dbReference>
<dbReference type="InterPro" id="IPR011263">
    <property type="entry name" value="DNA-dir_RNA_pol_RpoA/D/Rpb3"/>
</dbReference>
<dbReference type="InterPro" id="IPR011773">
    <property type="entry name" value="DNA-dir_RpoA"/>
</dbReference>
<dbReference type="InterPro" id="IPR036603">
    <property type="entry name" value="RBP11-like"/>
</dbReference>
<dbReference type="InterPro" id="IPR011260">
    <property type="entry name" value="RNAP_asu_C"/>
</dbReference>
<dbReference type="InterPro" id="IPR036643">
    <property type="entry name" value="RNApol_insert_sf"/>
</dbReference>
<dbReference type="NCBIfam" id="NF003513">
    <property type="entry name" value="PRK05182.1-2"/>
    <property type="match status" value="1"/>
</dbReference>
<dbReference type="NCBIfam" id="NF003519">
    <property type="entry name" value="PRK05182.2-5"/>
    <property type="match status" value="1"/>
</dbReference>
<dbReference type="NCBIfam" id="TIGR02027">
    <property type="entry name" value="rpoA"/>
    <property type="match status" value="1"/>
</dbReference>
<dbReference type="Pfam" id="PF01000">
    <property type="entry name" value="RNA_pol_A_bac"/>
    <property type="match status" value="1"/>
</dbReference>
<dbReference type="Pfam" id="PF03118">
    <property type="entry name" value="RNA_pol_A_CTD"/>
    <property type="match status" value="1"/>
</dbReference>
<dbReference type="Pfam" id="PF01193">
    <property type="entry name" value="RNA_pol_L"/>
    <property type="match status" value="1"/>
</dbReference>
<dbReference type="SMART" id="SM00662">
    <property type="entry name" value="RPOLD"/>
    <property type="match status" value="1"/>
</dbReference>
<dbReference type="SUPFAM" id="SSF47789">
    <property type="entry name" value="C-terminal domain of RNA polymerase alpha subunit"/>
    <property type="match status" value="1"/>
</dbReference>
<dbReference type="SUPFAM" id="SSF56553">
    <property type="entry name" value="Insert subdomain of RNA polymerase alpha subunit"/>
    <property type="match status" value="1"/>
</dbReference>
<dbReference type="SUPFAM" id="SSF55257">
    <property type="entry name" value="RBP11-like subunits of RNA polymerase"/>
    <property type="match status" value="1"/>
</dbReference>